<feature type="chain" id="PRO_0000165255" description="Head completion/stabilization protein">
    <location>
        <begin position="1"/>
        <end position="169"/>
    </location>
</feature>
<name>VPL_BPP2</name>
<accession>P25475</accession>
<keyword id="KW-1185">Reference proteome</keyword>
<reference key="1">
    <citation type="journal article" date="1991" name="Nucleic Acids Res.">
        <title>Nucleotide sequence of the DNA packaging and capsid synthesis genes of bacteriophage P2.</title>
        <authorList>
            <person name="Linderoth N.A."/>
            <person name="Ziermann R."/>
            <person name="Haggaard-Ljungquist E."/>
            <person name="Christie G.E."/>
            <person name="Calendar R."/>
        </authorList>
    </citation>
    <scope>NUCLEOTIDE SEQUENCE [GENOMIC DNA]</scope>
</reference>
<reference key="2">
    <citation type="journal article" date="1994" name="J. Bacteriol.">
        <title>Functions involved in bacteriophage P2-induced host cell lysis and identification of a new tail gene.</title>
        <authorList>
            <person name="Ziermann R."/>
            <person name="Bartlett B."/>
            <person name="Calendar R."/>
            <person name="Christie G.E."/>
        </authorList>
    </citation>
    <scope>NUCLEOTIDE SEQUENCE [GENOMIC DNA] OF 97-169</scope>
</reference>
<dbReference type="EMBL" id="AF063097">
    <property type="protein sequence ID" value="AAD03273.1"/>
    <property type="molecule type" value="Genomic_DNA"/>
</dbReference>
<dbReference type="PIR" id="S22801">
    <property type="entry name" value="S22801"/>
</dbReference>
<dbReference type="RefSeq" id="NP_046762.1">
    <property type="nucleotide sequence ID" value="NC_001895.1"/>
</dbReference>
<dbReference type="GeneID" id="77440793"/>
<dbReference type="KEGG" id="vg:77440793"/>
<dbReference type="Proteomes" id="UP000009092">
    <property type="component" value="Genome"/>
</dbReference>
<dbReference type="GO" id="GO:0019069">
    <property type="term" value="P:viral capsid assembly"/>
    <property type="evidence" value="ECO:0007669"/>
    <property type="project" value="InterPro"/>
</dbReference>
<dbReference type="InterPro" id="IPR009225">
    <property type="entry name" value="Phage_head_completion_GpL"/>
</dbReference>
<dbReference type="Pfam" id="PF05926">
    <property type="entry name" value="Phage_GPL"/>
    <property type="match status" value="1"/>
</dbReference>
<organismHost>
    <name type="scientific">Enterobacteriaceae</name>
    <dbReference type="NCBI Taxonomy" id="543"/>
</organismHost>
<sequence>MMTLIIPRKEAPVSGEGTVVIPQPAGDEPVIKNTFFFPDIDPKRVRERMRLEQTVAPARLREAIKSGMAETNAELYEYREQKIAAGFTRLADVPADDIDGESIKVFYYERAVCAMATASLYERYRGVDASAKGDKKADSIDSTIDELWRDMRWAVARIQGKPRCIVSQI</sequence>
<protein>
    <recommendedName>
        <fullName>Head completion/stabilization protein</fullName>
    </recommendedName>
    <alternativeName>
        <fullName>GpL</fullName>
    </alternativeName>
</protein>
<evidence type="ECO:0000305" key="1"/>
<comment type="function">
    <text>Carries out the completion of filled heads by rendering the newly packaged DNA in filled heads resistant to DNase. The protein is assumed to bind to DNA-filled capsids.</text>
</comment>
<comment type="developmental stage">
    <text>Acts late in the assembly process.</text>
</comment>
<comment type="similarity">
    <text evidence="1">To phage HP1 protein ORF20.</text>
</comment>
<comment type="caution">
    <text evidence="1">It is uncertain whether Met-1 or Met-2 is the initiator.</text>
</comment>
<organism>
    <name type="scientific">Escherichia phage P2</name>
    <name type="common">Bacteriophage P2</name>
    <dbReference type="NCBI Taxonomy" id="2905681"/>
    <lineage>
        <taxon>Viruses</taxon>
        <taxon>Duplodnaviria</taxon>
        <taxon>Heunggongvirae</taxon>
        <taxon>Uroviricota</taxon>
        <taxon>Caudoviricetes</taxon>
        <taxon>Peduoviridae</taxon>
        <taxon>Peduovirus</taxon>
        <taxon>Peduovirus P2</taxon>
    </lineage>
</organism>
<gene>
    <name type="primary">L</name>
</gene>
<proteinExistence type="evidence at transcript level"/>